<keyword id="KW-0030">Aminoacyl-tRNA synthetase</keyword>
<keyword id="KW-0067">ATP-binding</keyword>
<keyword id="KW-0436">Ligase</keyword>
<keyword id="KW-0496">Mitochondrion</keyword>
<keyword id="KW-0547">Nucleotide-binding</keyword>
<keyword id="KW-0648">Protein biosynthesis</keyword>
<keyword id="KW-1185">Reference proteome</keyword>
<protein>
    <recommendedName>
        <fullName>Asparagine--tRNA ligase, mitochondrial</fullName>
        <ecNumber>6.1.1.22</ecNumber>
    </recommendedName>
    <alternativeName>
        <fullName>Asparaginyl-tRNA synthetase</fullName>
        <shortName>AsnRS</shortName>
    </alternativeName>
</protein>
<sequence>MNKFQLPKTLKSLWHHPHNGELISINGWVRSIRKLKNVCFAMVSDGTCQQALQVVTSPEQSKKLSYGASVNIEGQLAVSKNAKLGLQQYELLAEKIKIYGQINDDNYPIQKKHLTTEMLRQIPHLRLRTAKQGEIFRLRSDSLKALRQFFSSKDFTETNPPIITSSDCEGAGEVFTLTPQETHKNKSFERDDQKHFFDRPAFLTVSTQLHLEALALGLSRVYTISPAFRAEQSHTSRHLAEFWMLEAEVAFMTSLSQLTSLMEDMIKYTLNSLMEQNYHRDHWDQLLKPWKCMTYSEAIEELSAVKKTWKYPPKWGNDLSSEHEKYLCEILHKTPVFVTDYPQKIKPFYMKSSGPDTVAAVDLLVPQVGELAGGSLRKDHLDEYKTYPPELQWYLDLMKYSNAPHGGFGLGIERLIAFLEGENTNVKETIPFPRSVGSIFA</sequence>
<gene>
    <name type="primary">slm5</name>
    <name type="ORF">SPBC1198.10c</name>
</gene>
<reference key="1">
    <citation type="journal article" date="2002" name="Nature">
        <title>The genome sequence of Schizosaccharomyces pombe.</title>
        <authorList>
            <person name="Wood V."/>
            <person name="Gwilliam R."/>
            <person name="Rajandream M.A."/>
            <person name="Lyne M.H."/>
            <person name="Lyne R."/>
            <person name="Stewart A."/>
            <person name="Sgouros J.G."/>
            <person name="Peat N."/>
            <person name="Hayles J."/>
            <person name="Baker S.G."/>
            <person name="Basham D."/>
            <person name="Bowman S."/>
            <person name="Brooks K."/>
            <person name="Brown D."/>
            <person name="Brown S."/>
            <person name="Chillingworth T."/>
            <person name="Churcher C.M."/>
            <person name="Collins M."/>
            <person name="Connor R."/>
            <person name="Cronin A."/>
            <person name="Davis P."/>
            <person name="Feltwell T."/>
            <person name="Fraser A."/>
            <person name="Gentles S."/>
            <person name="Goble A."/>
            <person name="Hamlin N."/>
            <person name="Harris D.E."/>
            <person name="Hidalgo J."/>
            <person name="Hodgson G."/>
            <person name="Holroyd S."/>
            <person name="Hornsby T."/>
            <person name="Howarth S."/>
            <person name="Huckle E.J."/>
            <person name="Hunt S."/>
            <person name="Jagels K."/>
            <person name="James K.D."/>
            <person name="Jones L."/>
            <person name="Jones M."/>
            <person name="Leather S."/>
            <person name="McDonald S."/>
            <person name="McLean J."/>
            <person name="Mooney P."/>
            <person name="Moule S."/>
            <person name="Mungall K.L."/>
            <person name="Murphy L.D."/>
            <person name="Niblett D."/>
            <person name="Odell C."/>
            <person name="Oliver K."/>
            <person name="O'Neil S."/>
            <person name="Pearson D."/>
            <person name="Quail M.A."/>
            <person name="Rabbinowitsch E."/>
            <person name="Rutherford K.M."/>
            <person name="Rutter S."/>
            <person name="Saunders D."/>
            <person name="Seeger K."/>
            <person name="Sharp S."/>
            <person name="Skelton J."/>
            <person name="Simmonds M.N."/>
            <person name="Squares R."/>
            <person name="Squares S."/>
            <person name="Stevens K."/>
            <person name="Taylor K."/>
            <person name="Taylor R.G."/>
            <person name="Tivey A."/>
            <person name="Walsh S.V."/>
            <person name="Warren T."/>
            <person name="Whitehead S."/>
            <person name="Woodward J.R."/>
            <person name="Volckaert G."/>
            <person name="Aert R."/>
            <person name="Robben J."/>
            <person name="Grymonprez B."/>
            <person name="Weltjens I."/>
            <person name="Vanstreels E."/>
            <person name="Rieger M."/>
            <person name="Schaefer M."/>
            <person name="Mueller-Auer S."/>
            <person name="Gabel C."/>
            <person name="Fuchs M."/>
            <person name="Duesterhoeft A."/>
            <person name="Fritzc C."/>
            <person name="Holzer E."/>
            <person name="Moestl D."/>
            <person name="Hilbert H."/>
            <person name="Borzym K."/>
            <person name="Langer I."/>
            <person name="Beck A."/>
            <person name="Lehrach H."/>
            <person name="Reinhardt R."/>
            <person name="Pohl T.M."/>
            <person name="Eger P."/>
            <person name="Zimmermann W."/>
            <person name="Wedler H."/>
            <person name="Wambutt R."/>
            <person name="Purnelle B."/>
            <person name="Goffeau A."/>
            <person name="Cadieu E."/>
            <person name="Dreano S."/>
            <person name="Gloux S."/>
            <person name="Lelaure V."/>
            <person name="Mottier S."/>
            <person name="Galibert F."/>
            <person name="Aves S.J."/>
            <person name="Xiang Z."/>
            <person name="Hunt C."/>
            <person name="Moore K."/>
            <person name="Hurst S.M."/>
            <person name="Lucas M."/>
            <person name="Rochet M."/>
            <person name="Gaillardin C."/>
            <person name="Tallada V.A."/>
            <person name="Garzon A."/>
            <person name="Thode G."/>
            <person name="Daga R.R."/>
            <person name="Cruzado L."/>
            <person name="Jimenez J."/>
            <person name="Sanchez M."/>
            <person name="del Rey F."/>
            <person name="Benito J."/>
            <person name="Dominguez A."/>
            <person name="Revuelta J.L."/>
            <person name="Moreno S."/>
            <person name="Armstrong J."/>
            <person name="Forsburg S.L."/>
            <person name="Cerutti L."/>
            <person name="Lowe T."/>
            <person name="McCombie W.R."/>
            <person name="Paulsen I."/>
            <person name="Potashkin J."/>
            <person name="Shpakovski G.V."/>
            <person name="Ussery D."/>
            <person name="Barrell B.G."/>
            <person name="Nurse P."/>
        </authorList>
    </citation>
    <scope>NUCLEOTIDE SEQUENCE [LARGE SCALE GENOMIC DNA]</scope>
    <source>
        <strain>972 / ATCC 24843</strain>
    </source>
</reference>
<reference key="2">
    <citation type="journal article" date="2006" name="Nat. Biotechnol.">
        <title>ORFeome cloning and global analysis of protein localization in the fission yeast Schizosaccharomyces pombe.</title>
        <authorList>
            <person name="Matsuyama A."/>
            <person name="Arai R."/>
            <person name="Yashiroda Y."/>
            <person name="Shirai A."/>
            <person name="Kamata A."/>
            <person name="Sekido S."/>
            <person name="Kobayashi Y."/>
            <person name="Hashimoto A."/>
            <person name="Hamamoto M."/>
            <person name="Hiraoka Y."/>
            <person name="Horinouchi S."/>
            <person name="Yoshida M."/>
        </authorList>
    </citation>
    <scope>SUBCELLULAR LOCATION [LARGE SCALE ANALYSIS]</scope>
</reference>
<evidence type="ECO:0000269" key="1">
    <source>
    </source>
</evidence>
<evidence type="ECO:0000305" key="2"/>
<proteinExistence type="inferred from homology"/>
<organism>
    <name type="scientific">Schizosaccharomyces pombe (strain 972 / ATCC 24843)</name>
    <name type="common">Fission yeast</name>
    <dbReference type="NCBI Taxonomy" id="284812"/>
    <lineage>
        <taxon>Eukaryota</taxon>
        <taxon>Fungi</taxon>
        <taxon>Dikarya</taxon>
        <taxon>Ascomycota</taxon>
        <taxon>Taphrinomycotina</taxon>
        <taxon>Schizosaccharomycetes</taxon>
        <taxon>Schizosaccharomycetales</taxon>
        <taxon>Schizosaccharomycetaceae</taxon>
        <taxon>Schizosaccharomyces</taxon>
    </lineage>
</organism>
<feature type="chain" id="PRO_0000315955" description="Asparagine--tRNA ligase, mitochondrial">
    <location>
        <begin position="1"/>
        <end position="441"/>
    </location>
</feature>
<comment type="catalytic activity">
    <reaction>
        <text>tRNA(Asn) + L-asparagine + ATP = L-asparaginyl-tRNA(Asn) + AMP + diphosphate + H(+)</text>
        <dbReference type="Rhea" id="RHEA:11180"/>
        <dbReference type="Rhea" id="RHEA-COMP:9659"/>
        <dbReference type="Rhea" id="RHEA-COMP:9674"/>
        <dbReference type="ChEBI" id="CHEBI:15378"/>
        <dbReference type="ChEBI" id="CHEBI:30616"/>
        <dbReference type="ChEBI" id="CHEBI:33019"/>
        <dbReference type="ChEBI" id="CHEBI:58048"/>
        <dbReference type="ChEBI" id="CHEBI:78442"/>
        <dbReference type="ChEBI" id="CHEBI:78515"/>
        <dbReference type="ChEBI" id="CHEBI:456215"/>
        <dbReference type="EC" id="6.1.1.22"/>
    </reaction>
</comment>
<comment type="subcellular location">
    <subcellularLocation>
        <location evidence="1">Mitochondrion</location>
    </subcellularLocation>
</comment>
<comment type="similarity">
    <text evidence="2">Belongs to the class-II aminoacyl-tRNA synthetase family.</text>
</comment>
<name>SYNM_SCHPO</name>
<dbReference type="EC" id="6.1.1.22"/>
<dbReference type="EMBL" id="CU329671">
    <property type="protein sequence ID" value="CAB91185.1"/>
    <property type="molecule type" value="Genomic_DNA"/>
</dbReference>
<dbReference type="RefSeq" id="NP_595079.1">
    <property type="nucleotide sequence ID" value="NM_001020985.2"/>
</dbReference>
<dbReference type="SMR" id="Q9P6I0"/>
<dbReference type="BioGRID" id="276188">
    <property type="interactions" value="11"/>
</dbReference>
<dbReference type="FunCoup" id="Q9P6I0">
    <property type="interactions" value="473"/>
</dbReference>
<dbReference type="STRING" id="284812.Q9P6I0"/>
<dbReference type="PaxDb" id="4896-SPBC1198.10c.1"/>
<dbReference type="EnsemblFungi" id="SPBC1198.10c.1">
    <property type="protein sequence ID" value="SPBC1198.10c.1:pep"/>
    <property type="gene ID" value="SPBC1198.10c"/>
</dbReference>
<dbReference type="GeneID" id="2539632"/>
<dbReference type="KEGG" id="spo:2539632"/>
<dbReference type="PomBase" id="SPBC1198.10c">
    <property type="gene designation" value="slm5"/>
</dbReference>
<dbReference type="VEuPathDB" id="FungiDB:SPBC1198.10c"/>
<dbReference type="eggNOG" id="KOG0554">
    <property type="taxonomic scope" value="Eukaryota"/>
</dbReference>
<dbReference type="HOGENOM" id="CLU_004553_2_0_1"/>
<dbReference type="InParanoid" id="Q9P6I0"/>
<dbReference type="OMA" id="PEMAFYD"/>
<dbReference type="PhylomeDB" id="Q9P6I0"/>
<dbReference type="PRO" id="PR:Q9P6I0"/>
<dbReference type="Proteomes" id="UP000002485">
    <property type="component" value="Chromosome II"/>
</dbReference>
<dbReference type="GO" id="GO:0005759">
    <property type="term" value="C:mitochondrial matrix"/>
    <property type="evidence" value="ECO:0000305"/>
    <property type="project" value="PomBase"/>
</dbReference>
<dbReference type="GO" id="GO:0005739">
    <property type="term" value="C:mitochondrion"/>
    <property type="evidence" value="ECO:0007005"/>
    <property type="project" value="PomBase"/>
</dbReference>
<dbReference type="GO" id="GO:0004816">
    <property type="term" value="F:asparagine-tRNA ligase activity"/>
    <property type="evidence" value="ECO:0000250"/>
    <property type="project" value="UniProtKB"/>
</dbReference>
<dbReference type="GO" id="GO:0005524">
    <property type="term" value="F:ATP binding"/>
    <property type="evidence" value="ECO:0000255"/>
    <property type="project" value="PomBase"/>
</dbReference>
<dbReference type="GO" id="GO:0000049">
    <property type="term" value="F:tRNA binding"/>
    <property type="evidence" value="ECO:0000305"/>
    <property type="project" value="PomBase"/>
</dbReference>
<dbReference type="GO" id="GO:0006421">
    <property type="term" value="P:asparaginyl-tRNA aminoacylation"/>
    <property type="evidence" value="ECO:0000250"/>
    <property type="project" value="UniProtKB"/>
</dbReference>
<dbReference type="GO" id="GO:0032543">
    <property type="term" value="P:mitochondrial translation"/>
    <property type="evidence" value="ECO:0000303"/>
    <property type="project" value="PomBase"/>
</dbReference>
<dbReference type="CDD" id="cd00776">
    <property type="entry name" value="AsxRS_core"/>
    <property type="match status" value="1"/>
</dbReference>
<dbReference type="CDD" id="cd04318">
    <property type="entry name" value="EcAsnRS_like_N"/>
    <property type="match status" value="1"/>
</dbReference>
<dbReference type="FunFam" id="3.30.930.10:FF:000016">
    <property type="entry name" value="Asparagine--tRNA ligase"/>
    <property type="match status" value="1"/>
</dbReference>
<dbReference type="Gene3D" id="3.30.930.10">
    <property type="entry name" value="Bira Bifunctional Protein, Domain 2"/>
    <property type="match status" value="1"/>
</dbReference>
<dbReference type="Gene3D" id="2.40.50.140">
    <property type="entry name" value="Nucleic acid-binding proteins"/>
    <property type="match status" value="1"/>
</dbReference>
<dbReference type="InterPro" id="IPR004364">
    <property type="entry name" value="Aa-tRNA-synt_II"/>
</dbReference>
<dbReference type="InterPro" id="IPR006195">
    <property type="entry name" value="aa-tRNA-synth_II"/>
</dbReference>
<dbReference type="InterPro" id="IPR045864">
    <property type="entry name" value="aa-tRNA-synth_II/BPL/LPL"/>
</dbReference>
<dbReference type="InterPro" id="IPR004522">
    <property type="entry name" value="Asn-tRNA-ligase"/>
</dbReference>
<dbReference type="InterPro" id="IPR002312">
    <property type="entry name" value="Asp/Asn-tRNA-synth_IIb"/>
</dbReference>
<dbReference type="InterPro" id="IPR012340">
    <property type="entry name" value="NA-bd_OB-fold"/>
</dbReference>
<dbReference type="InterPro" id="IPR004365">
    <property type="entry name" value="NA-bd_OB_tRNA"/>
</dbReference>
<dbReference type="NCBIfam" id="TIGR00457">
    <property type="entry name" value="asnS"/>
    <property type="match status" value="1"/>
</dbReference>
<dbReference type="NCBIfam" id="NF003037">
    <property type="entry name" value="PRK03932.1"/>
    <property type="match status" value="1"/>
</dbReference>
<dbReference type="PANTHER" id="PTHR22594:SF34">
    <property type="entry name" value="ASPARAGINE--TRNA LIGASE, MITOCHONDRIAL-RELATED"/>
    <property type="match status" value="1"/>
</dbReference>
<dbReference type="PANTHER" id="PTHR22594">
    <property type="entry name" value="ASPARTYL/LYSYL-TRNA SYNTHETASE"/>
    <property type="match status" value="1"/>
</dbReference>
<dbReference type="Pfam" id="PF00152">
    <property type="entry name" value="tRNA-synt_2"/>
    <property type="match status" value="1"/>
</dbReference>
<dbReference type="Pfam" id="PF01336">
    <property type="entry name" value="tRNA_anti-codon"/>
    <property type="match status" value="1"/>
</dbReference>
<dbReference type="PRINTS" id="PR01042">
    <property type="entry name" value="TRNASYNTHASP"/>
</dbReference>
<dbReference type="SUPFAM" id="SSF55681">
    <property type="entry name" value="Class II aaRS and biotin synthetases"/>
    <property type="match status" value="1"/>
</dbReference>
<dbReference type="SUPFAM" id="SSF50249">
    <property type="entry name" value="Nucleic acid-binding proteins"/>
    <property type="match status" value="1"/>
</dbReference>
<dbReference type="PROSITE" id="PS50862">
    <property type="entry name" value="AA_TRNA_LIGASE_II"/>
    <property type="match status" value="1"/>
</dbReference>
<accession>Q9P6I0</accession>